<comment type="function">
    <text evidence="1">Produces ATP from ADP in the presence of a proton gradient across the membrane. The catalytic sites are hosted primarily by the beta subunits.</text>
</comment>
<comment type="catalytic activity">
    <reaction evidence="1">
        <text>ATP + H2O + 4 H(+)(in) = ADP + phosphate + 5 H(+)(out)</text>
        <dbReference type="Rhea" id="RHEA:57720"/>
        <dbReference type="ChEBI" id="CHEBI:15377"/>
        <dbReference type="ChEBI" id="CHEBI:15378"/>
        <dbReference type="ChEBI" id="CHEBI:30616"/>
        <dbReference type="ChEBI" id="CHEBI:43474"/>
        <dbReference type="ChEBI" id="CHEBI:456216"/>
        <dbReference type="EC" id="7.1.2.2"/>
    </reaction>
</comment>
<comment type="subunit">
    <text evidence="1">F-type ATPases have 2 components, CF(1) - the catalytic core - and CF(0) - the membrane proton channel. CF(1) has five subunits: alpha(3), beta(3), gamma(1), delta(1), epsilon(1). CF(0) has three main subunits: a(1), b(2) and c(9-12). The alpha and beta chains form an alternating ring which encloses part of the gamma chain. CF(1) is attached to CF(0) by a central stalk formed by the gamma and epsilon chains, while a peripheral stalk is formed by the delta and b chains.</text>
</comment>
<comment type="subcellular location">
    <subcellularLocation>
        <location evidence="1">Cell inner membrane</location>
        <topology evidence="1">Peripheral membrane protein</topology>
    </subcellularLocation>
</comment>
<comment type="similarity">
    <text evidence="1">Belongs to the ATPase alpha/beta chains family.</text>
</comment>
<accession>Q7CFM8</accession>
<accession>Q74PA1</accession>
<keyword id="KW-0066">ATP synthesis</keyword>
<keyword id="KW-0067">ATP-binding</keyword>
<keyword id="KW-0997">Cell inner membrane</keyword>
<keyword id="KW-1003">Cell membrane</keyword>
<keyword id="KW-0139">CF(1)</keyword>
<keyword id="KW-0375">Hydrogen ion transport</keyword>
<keyword id="KW-0406">Ion transport</keyword>
<keyword id="KW-0472">Membrane</keyword>
<keyword id="KW-0547">Nucleotide-binding</keyword>
<keyword id="KW-1185">Reference proteome</keyword>
<keyword id="KW-1278">Translocase</keyword>
<keyword id="KW-0813">Transport</keyword>
<organism>
    <name type="scientific">Yersinia pestis</name>
    <dbReference type="NCBI Taxonomy" id="632"/>
    <lineage>
        <taxon>Bacteria</taxon>
        <taxon>Pseudomonadati</taxon>
        <taxon>Pseudomonadota</taxon>
        <taxon>Gammaproteobacteria</taxon>
        <taxon>Enterobacterales</taxon>
        <taxon>Yersiniaceae</taxon>
        <taxon>Yersinia</taxon>
    </lineage>
</organism>
<feature type="chain" id="PRO_1000055181" description="ATP synthase subunit beta">
    <location>
        <begin position="1"/>
        <end position="460"/>
    </location>
</feature>
<feature type="binding site" evidence="1">
    <location>
        <begin position="150"/>
        <end position="157"/>
    </location>
    <ligand>
        <name>ATP</name>
        <dbReference type="ChEBI" id="CHEBI:30616"/>
    </ligand>
</feature>
<evidence type="ECO:0000255" key="1">
    <source>
        <dbReference type="HAMAP-Rule" id="MF_01347"/>
    </source>
</evidence>
<gene>
    <name evidence="1" type="primary">atpD</name>
    <name type="ordered locus">YPO4121</name>
    <name type="ordered locus">y4135</name>
    <name type="ordered locus">YP_4028</name>
</gene>
<dbReference type="EC" id="7.1.2.2" evidence="1"/>
<dbReference type="EMBL" id="AE009952">
    <property type="protein sequence ID" value="AAM87677.1"/>
    <property type="molecule type" value="Genomic_DNA"/>
</dbReference>
<dbReference type="EMBL" id="AE017042">
    <property type="protein sequence ID" value="AAS64167.1"/>
    <property type="molecule type" value="Genomic_DNA"/>
</dbReference>
<dbReference type="EMBL" id="AL590842">
    <property type="protein sequence ID" value="CAL22689.1"/>
    <property type="molecule type" value="Genomic_DNA"/>
</dbReference>
<dbReference type="PIR" id="AE0500">
    <property type="entry name" value="AE0500"/>
</dbReference>
<dbReference type="RefSeq" id="WP_002220753.1">
    <property type="nucleotide sequence ID" value="NZ_WUCM01000028.1"/>
</dbReference>
<dbReference type="RefSeq" id="YP_002348972.1">
    <property type="nucleotide sequence ID" value="NC_003143.1"/>
</dbReference>
<dbReference type="SMR" id="Q7CFM8"/>
<dbReference type="STRING" id="214092.YPO4121"/>
<dbReference type="PaxDb" id="214092-YPO4121"/>
<dbReference type="DNASU" id="1149082"/>
<dbReference type="EnsemblBacteria" id="AAS64167">
    <property type="protein sequence ID" value="AAS64167"/>
    <property type="gene ID" value="YP_4028"/>
</dbReference>
<dbReference type="GeneID" id="57974603"/>
<dbReference type="KEGG" id="ype:YPO4121"/>
<dbReference type="KEGG" id="ypk:y4135"/>
<dbReference type="KEGG" id="ypm:YP_4028"/>
<dbReference type="PATRIC" id="fig|214092.21.peg.4665"/>
<dbReference type="eggNOG" id="COG0055">
    <property type="taxonomic scope" value="Bacteria"/>
</dbReference>
<dbReference type="HOGENOM" id="CLU_022398_0_2_6"/>
<dbReference type="OMA" id="SMEEGGW"/>
<dbReference type="OrthoDB" id="9801639at2"/>
<dbReference type="Proteomes" id="UP000000815">
    <property type="component" value="Chromosome"/>
</dbReference>
<dbReference type="Proteomes" id="UP000001019">
    <property type="component" value="Chromosome"/>
</dbReference>
<dbReference type="Proteomes" id="UP000002490">
    <property type="component" value="Chromosome"/>
</dbReference>
<dbReference type="GO" id="GO:0005886">
    <property type="term" value="C:plasma membrane"/>
    <property type="evidence" value="ECO:0007669"/>
    <property type="project" value="UniProtKB-SubCell"/>
</dbReference>
<dbReference type="GO" id="GO:0045259">
    <property type="term" value="C:proton-transporting ATP synthase complex"/>
    <property type="evidence" value="ECO:0007669"/>
    <property type="project" value="UniProtKB-KW"/>
</dbReference>
<dbReference type="GO" id="GO:0005524">
    <property type="term" value="F:ATP binding"/>
    <property type="evidence" value="ECO:0007669"/>
    <property type="project" value="UniProtKB-UniRule"/>
</dbReference>
<dbReference type="GO" id="GO:0016887">
    <property type="term" value="F:ATP hydrolysis activity"/>
    <property type="evidence" value="ECO:0007669"/>
    <property type="project" value="InterPro"/>
</dbReference>
<dbReference type="GO" id="GO:0046933">
    <property type="term" value="F:proton-transporting ATP synthase activity, rotational mechanism"/>
    <property type="evidence" value="ECO:0007669"/>
    <property type="project" value="UniProtKB-UniRule"/>
</dbReference>
<dbReference type="CDD" id="cd18110">
    <property type="entry name" value="ATP-synt_F1_beta_C"/>
    <property type="match status" value="1"/>
</dbReference>
<dbReference type="CDD" id="cd18115">
    <property type="entry name" value="ATP-synt_F1_beta_N"/>
    <property type="match status" value="1"/>
</dbReference>
<dbReference type="CDD" id="cd01133">
    <property type="entry name" value="F1-ATPase_beta_CD"/>
    <property type="match status" value="1"/>
</dbReference>
<dbReference type="FunFam" id="1.10.1140.10:FF:000001">
    <property type="entry name" value="ATP synthase subunit beta"/>
    <property type="match status" value="1"/>
</dbReference>
<dbReference type="FunFam" id="2.40.10.170:FF:000003">
    <property type="entry name" value="ATP synthase subunit beta"/>
    <property type="match status" value="1"/>
</dbReference>
<dbReference type="FunFam" id="3.40.50.300:FF:000004">
    <property type="entry name" value="ATP synthase subunit beta"/>
    <property type="match status" value="1"/>
</dbReference>
<dbReference type="Gene3D" id="2.40.10.170">
    <property type="match status" value="1"/>
</dbReference>
<dbReference type="Gene3D" id="1.10.1140.10">
    <property type="entry name" value="Bovine Mitochondrial F1-atpase, Atp Synthase Beta Chain, Chain D, domain 3"/>
    <property type="match status" value="1"/>
</dbReference>
<dbReference type="Gene3D" id="3.40.50.300">
    <property type="entry name" value="P-loop containing nucleotide triphosphate hydrolases"/>
    <property type="match status" value="1"/>
</dbReference>
<dbReference type="HAMAP" id="MF_01347">
    <property type="entry name" value="ATP_synth_beta_bact"/>
    <property type="match status" value="1"/>
</dbReference>
<dbReference type="InterPro" id="IPR003593">
    <property type="entry name" value="AAA+_ATPase"/>
</dbReference>
<dbReference type="InterPro" id="IPR055190">
    <property type="entry name" value="ATP-synt_VA_C"/>
</dbReference>
<dbReference type="InterPro" id="IPR005722">
    <property type="entry name" value="ATP_synth_F1_bsu"/>
</dbReference>
<dbReference type="InterPro" id="IPR020003">
    <property type="entry name" value="ATPase_a/bsu_AS"/>
</dbReference>
<dbReference type="InterPro" id="IPR050053">
    <property type="entry name" value="ATPase_alpha/beta_chains"/>
</dbReference>
<dbReference type="InterPro" id="IPR004100">
    <property type="entry name" value="ATPase_F1/V1/A1_a/bsu_N"/>
</dbReference>
<dbReference type="InterPro" id="IPR036121">
    <property type="entry name" value="ATPase_F1/V1/A1_a/bsu_N_sf"/>
</dbReference>
<dbReference type="InterPro" id="IPR000194">
    <property type="entry name" value="ATPase_F1/V1/A1_a/bsu_nucl-bd"/>
</dbReference>
<dbReference type="InterPro" id="IPR024034">
    <property type="entry name" value="ATPase_F1/V1_b/a_C"/>
</dbReference>
<dbReference type="InterPro" id="IPR027417">
    <property type="entry name" value="P-loop_NTPase"/>
</dbReference>
<dbReference type="NCBIfam" id="TIGR01039">
    <property type="entry name" value="atpD"/>
    <property type="match status" value="1"/>
</dbReference>
<dbReference type="PANTHER" id="PTHR15184">
    <property type="entry name" value="ATP SYNTHASE"/>
    <property type="match status" value="1"/>
</dbReference>
<dbReference type="PANTHER" id="PTHR15184:SF71">
    <property type="entry name" value="ATP SYNTHASE SUBUNIT BETA, MITOCHONDRIAL"/>
    <property type="match status" value="1"/>
</dbReference>
<dbReference type="Pfam" id="PF00006">
    <property type="entry name" value="ATP-synt_ab"/>
    <property type="match status" value="1"/>
</dbReference>
<dbReference type="Pfam" id="PF02874">
    <property type="entry name" value="ATP-synt_ab_N"/>
    <property type="match status" value="1"/>
</dbReference>
<dbReference type="Pfam" id="PF22919">
    <property type="entry name" value="ATP-synt_VA_C"/>
    <property type="match status" value="1"/>
</dbReference>
<dbReference type="SMART" id="SM00382">
    <property type="entry name" value="AAA"/>
    <property type="match status" value="1"/>
</dbReference>
<dbReference type="SUPFAM" id="SSF47917">
    <property type="entry name" value="C-terminal domain of alpha and beta subunits of F1 ATP synthase"/>
    <property type="match status" value="1"/>
</dbReference>
<dbReference type="SUPFAM" id="SSF50615">
    <property type="entry name" value="N-terminal domain of alpha and beta subunits of F1 ATP synthase"/>
    <property type="match status" value="1"/>
</dbReference>
<dbReference type="SUPFAM" id="SSF52540">
    <property type="entry name" value="P-loop containing nucleoside triphosphate hydrolases"/>
    <property type="match status" value="1"/>
</dbReference>
<dbReference type="PROSITE" id="PS00152">
    <property type="entry name" value="ATPASE_ALPHA_BETA"/>
    <property type="match status" value="1"/>
</dbReference>
<reference key="1">
    <citation type="journal article" date="2002" name="J. Bacteriol.">
        <title>Genome sequence of Yersinia pestis KIM.</title>
        <authorList>
            <person name="Deng W."/>
            <person name="Burland V."/>
            <person name="Plunkett G. III"/>
            <person name="Boutin A."/>
            <person name="Mayhew G.F."/>
            <person name="Liss P."/>
            <person name="Perna N.T."/>
            <person name="Rose D.J."/>
            <person name="Mau B."/>
            <person name="Zhou S."/>
            <person name="Schwartz D.C."/>
            <person name="Fetherston J.D."/>
            <person name="Lindler L.E."/>
            <person name="Brubaker R.R."/>
            <person name="Plano G.V."/>
            <person name="Straley S.C."/>
            <person name="McDonough K.A."/>
            <person name="Nilles M.L."/>
            <person name="Matson J.S."/>
            <person name="Blattner F.R."/>
            <person name="Perry R.D."/>
        </authorList>
    </citation>
    <scope>NUCLEOTIDE SEQUENCE [LARGE SCALE GENOMIC DNA]</scope>
    <source>
        <strain>KIM10+ / Biovar Mediaevalis</strain>
    </source>
</reference>
<reference key="2">
    <citation type="journal article" date="2001" name="Nature">
        <title>Genome sequence of Yersinia pestis, the causative agent of plague.</title>
        <authorList>
            <person name="Parkhill J."/>
            <person name="Wren B.W."/>
            <person name="Thomson N.R."/>
            <person name="Titball R.W."/>
            <person name="Holden M.T.G."/>
            <person name="Prentice M.B."/>
            <person name="Sebaihia M."/>
            <person name="James K.D."/>
            <person name="Churcher C.M."/>
            <person name="Mungall K.L."/>
            <person name="Baker S."/>
            <person name="Basham D."/>
            <person name="Bentley S.D."/>
            <person name="Brooks K."/>
            <person name="Cerdeno-Tarraga A.-M."/>
            <person name="Chillingworth T."/>
            <person name="Cronin A."/>
            <person name="Davies R.M."/>
            <person name="Davis P."/>
            <person name="Dougan G."/>
            <person name="Feltwell T."/>
            <person name="Hamlin N."/>
            <person name="Holroyd S."/>
            <person name="Jagels K."/>
            <person name="Karlyshev A.V."/>
            <person name="Leather S."/>
            <person name="Moule S."/>
            <person name="Oyston P.C.F."/>
            <person name="Quail M.A."/>
            <person name="Rutherford K.M."/>
            <person name="Simmonds M."/>
            <person name="Skelton J."/>
            <person name="Stevens K."/>
            <person name="Whitehead S."/>
            <person name="Barrell B.G."/>
        </authorList>
    </citation>
    <scope>NUCLEOTIDE SEQUENCE [LARGE SCALE GENOMIC DNA]</scope>
    <source>
        <strain>CO-92 / Biovar Orientalis</strain>
    </source>
</reference>
<reference key="3">
    <citation type="journal article" date="2004" name="DNA Res.">
        <title>Complete genome sequence of Yersinia pestis strain 91001, an isolate avirulent to humans.</title>
        <authorList>
            <person name="Song Y."/>
            <person name="Tong Z."/>
            <person name="Wang J."/>
            <person name="Wang L."/>
            <person name="Guo Z."/>
            <person name="Han Y."/>
            <person name="Zhang J."/>
            <person name="Pei D."/>
            <person name="Zhou D."/>
            <person name="Qin H."/>
            <person name="Pang X."/>
            <person name="Han Y."/>
            <person name="Zhai J."/>
            <person name="Li M."/>
            <person name="Cui B."/>
            <person name="Qi Z."/>
            <person name="Jin L."/>
            <person name="Dai R."/>
            <person name="Chen F."/>
            <person name="Li S."/>
            <person name="Ye C."/>
            <person name="Du Z."/>
            <person name="Lin W."/>
            <person name="Wang J."/>
            <person name="Yu J."/>
            <person name="Yang H."/>
            <person name="Wang J."/>
            <person name="Huang P."/>
            <person name="Yang R."/>
        </authorList>
    </citation>
    <scope>NUCLEOTIDE SEQUENCE [LARGE SCALE GENOMIC DNA]</scope>
    <source>
        <strain>91001 / Biovar Mediaevalis</strain>
    </source>
</reference>
<name>ATPB_YERPE</name>
<proteinExistence type="inferred from homology"/>
<sequence>MATGKIIQVIGAVVDVEFPQDAVPKVYNALEVEGTTEKLVLEVQQQLGGGVVRCIAMGSSDGLSRGLKVTNLEHPIEVPVGKATLGRIMNVLGEPIDMKGPIGEEERWAIHREAPSYEELASSQDLLETGIKVMDLICPFAKGGKVGLFGGAGVGKTVNMMELIRNIAIEHSGYSVFAGVGERTREGNDFYHEMTDSNVLDKVSLVYGQMNEPPGNRLRVALTGLTMAEKFRDEGRDVLLFIDNIYRYTLAGTEVSALLGRMPSAVGYQPTLAEEMGVLQERITSTKTGSITSVQAVYVPADDLTDPSPATTFAHLDATVVLSRQIASLGIYPAVDPLDSTSRQLDPLVVGQEHYDVARGVQSILQRYQELKDIIAILGMDELSEDDKLVVSRARKIQRFLSQPFFVAEVFTGSPGKFVSLKDTIRGFKGIMNGDYDHLPEQAFYMVGTIEEAVEKAKKL</sequence>
<protein>
    <recommendedName>
        <fullName evidence="1">ATP synthase subunit beta</fullName>
        <ecNumber evidence="1">7.1.2.2</ecNumber>
    </recommendedName>
    <alternativeName>
        <fullName evidence="1">ATP synthase F1 sector subunit beta</fullName>
    </alternativeName>
    <alternativeName>
        <fullName evidence="1">F-ATPase subunit beta</fullName>
    </alternativeName>
</protein>